<comment type="pathway">
    <text>Bacterial outer membrane biogenesis; lipopolysaccharide biosynthesis.</text>
</comment>
<comment type="similarity">
    <text evidence="1">Belongs to the glycosyltransferase 2 family.</text>
</comment>
<dbReference type="EC" id="2.4.-.-"/>
<dbReference type="EMBL" id="X71970">
    <property type="protein sequence ID" value="CAA50773.1"/>
    <property type="molecule type" value="Genomic_DNA"/>
</dbReference>
<dbReference type="EMBL" id="AE005674">
    <property type="protein sequence ID" value="AAN43637.1"/>
    <property type="molecule type" value="Genomic_DNA"/>
</dbReference>
<dbReference type="EMBL" id="AE014073">
    <property type="protein sequence ID" value="AAP17466.1"/>
    <property type="molecule type" value="Genomic_DNA"/>
</dbReference>
<dbReference type="PIR" id="B36966">
    <property type="entry name" value="B36966"/>
</dbReference>
<dbReference type="RefSeq" id="NP_707930.1">
    <property type="nucleotide sequence ID" value="NC_004337.2"/>
</dbReference>
<dbReference type="SMR" id="P37783"/>
<dbReference type="STRING" id="198214.SF2098"/>
<dbReference type="CAZy" id="GT2">
    <property type="family name" value="Glycosyltransferase Family 2"/>
</dbReference>
<dbReference type="PaxDb" id="198214-SF2098"/>
<dbReference type="GeneID" id="1025285"/>
<dbReference type="KEGG" id="sfl:SF2098"/>
<dbReference type="KEGG" id="sfx:S2220"/>
<dbReference type="PATRIC" id="fig|198214.7.peg.2506"/>
<dbReference type="HOGENOM" id="CLU_025996_2_1_6"/>
<dbReference type="UniPathway" id="UPA00030"/>
<dbReference type="Proteomes" id="UP000001006">
    <property type="component" value="Chromosome"/>
</dbReference>
<dbReference type="Proteomes" id="UP000002673">
    <property type="component" value="Chromosome"/>
</dbReference>
<dbReference type="GO" id="GO:0016758">
    <property type="term" value="F:hexosyltransferase activity"/>
    <property type="evidence" value="ECO:0007669"/>
    <property type="project" value="UniProtKB-ARBA"/>
</dbReference>
<dbReference type="GO" id="GO:0009103">
    <property type="term" value="P:lipopolysaccharide biosynthetic process"/>
    <property type="evidence" value="ECO:0007669"/>
    <property type="project" value="UniProtKB-UniPathway"/>
</dbReference>
<dbReference type="Gene3D" id="3.90.550.10">
    <property type="entry name" value="Spore Coat Polysaccharide Biosynthesis Protein SpsA, Chain A"/>
    <property type="match status" value="1"/>
</dbReference>
<dbReference type="InterPro" id="IPR001173">
    <property type="entry name" value="Glyco_trans_2-like"/>
</dbReference>
<dbReference type="InterPro" id="IPR029044">
    <property type="entry name" value="Nucleotide-diphossugar_trans"/>
</dbReference>
<dbReference type="PANTHER" id="PTHR22916">
    <property type="entry name" value="GLYCOSYLTRANSFERASE"/>
    <property type="match status" value="1"/>
</dbReference>
<dbReference type="PANTHER" id="PTHR22916:SF3">
    <property type="entry name" value="UDP-GLCNAC:BETAGAL BETA-1,3-N-ACETYLGLUCOSAMINYLTRANSFERASE-LIKE PROTEIN 1"/>
    <property type="match status" value="1"/>
</dbReference>
<dbReference type="Pfam" id="PF00535">
    <property type="entry name" value="Glycos_transf_2"/>
    <property type="match status" value="1"/>
</dbReference>
<dbReference type="SUPFAM" id="SSF53448">
    <property type="entry name" value="Nucleotide-diphospho-sugar transferases"/>
    <property type="match status" value="1"/>
</dbReference>
<name>RFBG_SHIFL</name>
<feature type="chain" id="PRO_0000059215" description="dTDP-rhamnosyl transferase RfbG">
    <location>
        <begin position="1"/>
        <end position="289"/>
    </location>
</feature>
<sequence length="289" mass="33803">MATYNGECWIEEQLKSIIEQKDVDISIFISDDLSTDNTLNICEEFQLSYPSIINILPSVNKFGGAGKNFYRLIKDVDLENYDYICFSDQDDIWYKDKIKNAIDCLVFNNANCYSSNVIAYYPSGRKNLVDKAQSQTQFDYFFEAAGPGCTYVIKKETLIEFKKFIINNKNAAQDICLHDWFLYSFARTRNYSWYIDRKPTMLYRQHENNQVGANISFKAKYKRLGLVRNKWYRKEVTKIANALADDSFVNNQLGKGYIGNLILALSFWKLRRKKADKIYILLMLILNIF</sequence>
<reference key="1">
    <citation type="journal article" date="1994" name="J. Bacteriol.">
        <title>Characterization of the rfc region of Shigella flexneri.</title>
        <authorList>
            <person name="Morona R."/>
            <person name="Mavris M."/>
            <person name="Fallarino A."/>
            <person name="Manning P.A."/>
        </authorList>
    </citation>
    <scope>NUCLEOTIDE SEQUENCE [GENOMIC DNA]</scope>
    <source>
        <strain>PE577 / Serotype 2a</strain>
    </source>
</reference>
<reference key="2">
    <citation type="journal article" date="2002" name="Nucleic Acids Res.">
        <title>Genome sequence of Shigella flexneri 2a: insights into pathogenicity through comparison with genomes of Escherichia coli K12 and O157.</title>
        <authorList>
            <person name="Jin Q."/>
            <person name="Yuan Z."/>
            <person name="Xu J."/>
            <person name="Wang Y."/>
            <person name="Shen Y."/>
            <person name="Lu W."/>
            <person name="Wang J."/>
            <person name="Liu H."/>
            <person name="Yang J."/>
            <person name="Yang F."/>
            <person name="Zhang X."/>
            <person name="Zhang J."/>
            <person name="Yang G."/>
            <person name="Wu H."/>
            <person name="Qu D."/>
            <person name="Dong J."/>
            <person name="Sun L."/>
            <person name="Xue Y."/>
            <person name="Zhao A."/>
            <person name="Gao Y."/>
            <person name="Zhu J."/>
            <person name="Kan B."/>
            <person name="Ding K."/>
            <person name="Chen S."/>
            <person name="Cheng H."/>
            <person name="Yao Z."/>
            <person name="He B."/>
            <person name="Chen R."/>
            <person name="Ma D."/>
            <person name="Qiang B."/>
            <person name="Wen Y."/>
            <person name="Hou Y."/>
            <person name="Yu J."/>
        </authorList>
    </citation>
    <scope>NUCLEOTIDE SEQUENCE [LARGE SCALE GENOMIC DNA]</scope>
    <source>
        <strain>301 / Serotype 2a</strain>
    </source>
</reference>
<reference key="3">
    <citation type="journal article" date="2003" name="Infect. Immun.">
        <title>Complete genome sequence and comparative genomics of Shigella flexneri serotype 2a strain 2457T.</title>
        <authorList>
            <person name="Wei J."/>
            <person name="Goldberg M.B."/>
            <person name="Burland V."/>
            <person name="Venkatesan M.M."/>
            <person name="Deng W."/>
            <person name="Fournier G."/>
            <person name="Mayhew G.F."/>
            <person name="Plunkett G. III"/>
            <person name="Rose D.J."/>
            <person name="Darling A."/>
            <person name="Mau B."/>
            <person name="Perna N.T."/>
            <person name="Payne S.M."/>
            <person name="Runyen-Janecky L.J."/>
            <person name="Zhou S."/>
            <person name="Schwartz D.C."/>
            <person name="Blattner F.R."/>
        </authorList>
    </citation>
    <scope>NUCLEOTIDE SEQUENCE [LARGE SCALE GENOMIC DNA]</scope>
    <source>
        <strain>ATCC 700930 / 2457T / Serotype 2a</strain>
    </source>
</reference>
<keyword id="KW-0328">Glycosyltransferase</keyword>
<keyword id="KW-0448">Lipopolysaccharide biosynthesis</keyword>
<keyword id="KW-1185">Reference proteome</keyword>
<keyword id="KW-0808">Transferase</keyword>
<organism>
    <name type="scientific">Shigella flexneri</name>
    <dbReference type="NCBI Taxonomy" id="623"/>
    <lineage>
        <taxon>Bacteria</taxon>
        <taxon>Pseudomonadati</taxon>
        <taxon>Pseudomonadota</taxon>
        <taxon>Gammaproteobacteria</taxon>
        <taxon>Enterobacterales</taxon>
        <taxon>Enterobacteriaceae</taxon>
        <taxon>Shigella</taxon>
    </lineage>
</organism>
<proteinExistence type="inferred from homology"/>
<gene>
    <name type="primary">rfbG</name>
    <name type="ordered locus">SF2098</name>
    <name type="ordered locus">S2220</name>
</gene>
<accession>P37783</accession>
<protein>
    <recommendedName>
        <fullName>dTDP-rhamnosyl transferase RfbG</fullName>
        <ecNumber>2.4.-.-</ecNumber>
    </recommendedName>
</protein>
<evidence type="ECO:0000305" key="1"/>